<feature type="chain" id="PRO_1000085596" description="Acyl carrier protein">
    <location>
        <begin position="1"/>
        <end position="78"/>
    </location>
</feature>
<feature type="domain" description="Carrier" evidence="2">
    <location>
        <begin position="2"/>
        <end position="77"/>
    </location>
</feature>
<feature type="modified residue" description="O-(pantetheine 4'-phosphoryl)serine" evidence="2">
    <location>
        <position position="37"/>
    </location>
</feature>
<evidence type="ECO:0000255" key="1">
    <source>
        <dbReference type="HAMAP-Rule" id="MF_01217"/>
    </source>
</evidence>
<evidence type="ECO:0000255" key="2">
    <source>
        <dbReference type="PROSITE-ProRule" id="PRU00258"/>
    </source>
</evidence>
<comment type="function">
    <text evidence="1">Carrier of the growing fatty acid chain in fatty acid biosynthesis.</text>
</comment>
<comment type="pathway">
    <text evidence="1">Lipid metabolism; fatty acid biosynthesis.</text>
</comment>
<comment type="subcellular location">
    <subcellularLocation>
        <location evidence="1">Cytoplasm</location>
    </subcellularLocation>
</comment>
<comment type="PTM">
    <text evidence="1">4'-phosphopantetheine is transferred from CoA to a specific serine of apo-ACP by AcpS. This modification is essential for activity because fatty acids are bound in thioester linkage to the sulfhydryl of the prosthetic group.</text>
</comment>
<comment type="similarity">
    <text evidence="1">Belongs to the acyl carrier protein (ACP) family.</text>
</comment>
<organism>
    <name type="scientific">Brucella suis (strain ATCC 23445 / NCTC 10510)</name>
    <dbReference type="NCBI Taxonomy" id="470137"/>
    <lineage>
        <taxon>Bacteria</taxon>
        <taxon>Pseudomonadati</taxon>
        <taxon>Pseudomonadota</taxon>
        <taxon>Alphaproteobacteria</taxon>
        <taxon>Hyphomicrobiales</taxon>
        <taxon>Brucellaceae</taxon>
        <taxon>Brucella/Ochrobactrum group</taxon>
        <taxon>Brucella</taxon>
    </lineage>
</organism>
<dbReference type="EMBL" id="CP000911">
    <property type="protein sequence ID" value="ABY37573.1"/>
    <property type="molecule type" value="Genomic_DNA"/>
</dbReference>
<dbReference type="RefSeq" id="WP_002963616.1">
    <property type="nucleotide sequence ID" value="NC_010169.1"/>
</dbReference>
<dbReference type="BMRB" id="B0CKE3"/>
<dbReference type="SMR" id="B0CKE3"/>
<dbReference type="KEGG" id="bmt:BSUIS_A0485"/>
<dbReference type="HOGENOM" id="CLU_108696_5_1_5"/>
<dbReference type="UniPathway" id="UPA00094"/>
<dbReference type="Proteomes" id="UP000008545">
    <property type="component" value="Chromosome I"/>
</dbReference>
<dbReference type="GO" id="GO:0005829">
    <property type="term" value="C:cytosol"/>
    <property type="evidence" value="ECO:0007669"/>
    <property type="project" value="TreeGrafter"/>
</dbReference>
<dbReference type="GO" id="GO:0016020">
    <property type="term" value="C:membrane"/>
    <property type="evidence" value="ECO:0007669"/>
    <property type="project" value="GOC"/>
</dbReference>
<dbReference type="GO" id="GO:0000035">
    <property type="term" value="F:acyl binding"/>
    <property type="evidence" value="ECO:0007669"/>
    <property type="project" value="TreeGrafter"/>
</dbReference>
<dbReference type="GO" id="GO:0000036">
    <property type="term" value="F:acyl carrier activity"/>
    <property type="evidence" value="ECO:0007669"/>
    <property type="project" value="UniProtKB-UniRule"/>
</dbReference>
<dbReference type="GO" id="GO:0031177">
    <property type="term" value="F:phosphopantetheine binding"/>
    <property type="evidence" value="ECO:0007669"/>
    <property type="project" value="InterPro"/>
</dbReference>
<dbReference type="GO" id="GO:0009245">
    <property type="term" value="P:lipid A biosynthetic process"/>
    <property type="evidence" value="ECO:0007669"/>
    <property type="project" value="TreeGrafter"/>
</dbReference>
<dbReference type="FunFam" id="1.10.1200.10:FF:000001">
    <property type="entry name" value="Acyl carrier protein"/>
    <property type="match status" value="1"/>
</dbReference>
<dbReference type="Gene3D" id="1.10.1200.10">
    <property type="entry name" value="ACP-like"/>
    <property type="match status" value="1"/>
</dbReference>
<dbReference type="HAMAP" id="MF_01217">
    <property type="entry name" value="Acyl_carrier"/>
    <property type="match status" value="1"/>
</dbReference>
<dbReference type="InterPro" id="IPR003231">
    <property type="entry name" value="ACP"/>
</dbReference>
<dbReference type="InterPro" id="IPR036736">
    <property type="entry name" value="ACP-like_sf"/>
</dbReference>
<dbReference type="InterPro" id="IPR020806">
    <property type="entry name" value="PKS_PP-bd"/>
</dbReference>
<dbReference type="InterPro" id="IPR009081">
    <property type="entry name" value="PP-bd_ACP"/>
</dbReference>
<dbReference type="InterPro" id="IPR006162">
    <property type="entry name" value="Ppantetheine_attach_site"/>
</dbReference>
<dbReference type="NCBIfam" id="TIGR00517">
    <property type="entry name" value="acyl_carrier"/>
    <property type="match status" value="1"/>
</dbReference>
<dbReference type="NCBIfam" id="NF002148">
    <property type="entry name" value="PRK00982.1-2"/>
    <property type="match status" value="1"/>
</dbReference>
<dbReference type="NCBIfam" id="NF002149">
    <property type="entry name" value="PRK00982.1-3"/>
    <property type="match status" value="1"/>
</dbReference>
<dbReference type="NCBIfam" id="NF002150">
    <property type="entry name" value="PRK00982.1-4"/>
    <property type="match status" value="1"/>
</dbReference>
<dbReference type="NCBIfam" id="NF002151">
    <property type="entry name" value="PRK00982.1-5"/>
    <property type="match status" value="1"/>
</dbReference>
<dbReference type="PANTHER" id="PTHR20863">
    <property type="entry name" value="ACYL CARRIER PROTEIN"/>
    <property type="match status" value="1"/>
</dbReference>
<dbReference type="PANTHER" id="PTHR20863:SF76">
    <property type="entry name" value="CARRIER DOMAIN-CONTAINING PROTEIN"/>
    <property type="match status" value="1"/>
</dbReference>
<dbReference type="Pfam" id="PF00550">
    <property type="entry name" value="PP-binding"/>
    <property type="match status" value="1"/>
</dbReference>
<dbReference type="SMART" id="SM00823">
    <property type="entry name" value="PKS_PP"/>
    <property type="match status" value="1"/>
</dbReference>
<dbReference type="SUPFAM" id="SSF47336">
    <property type="entry name" value="ACP-like"/>
    <property type="match status" value="1"/>
</dbReference>
<dbReference type="PROSITE" id="PS50075">
    <property type="entry name" value="CARRIER"/>
    <property type="match status" value="1"/>
</dbReference>
<dbReference type="PROSITE" id="PS00012">
    <property type="entry name" value="PHOSPHOPANTETHEINE"/>
    <property type="match status" value="1"/>
</dbReference>
<reference key="1">
    <citation type="submission" date="2007-12" db="EMBL/GenBank/DDBJ databases">
        <title>Brucella suis ATCC 23445 whole genome shotgun sequencing project.</title>
        <authorList>
            <person name="Setubal J.C."/>
            <person name="Bowns C."/>
            <person name="Boyle S."/>
            <person name="Crasta O.R."/>
            <person name="Czar M.J."/>
            <person name="Dharmanolla C."/>
            <person name="Gillespie J.J."/>
            <person name="Kenyon R.W."/>
            <person name="Lu J."/>
            <person name="Mane S."/>
            <person name="Mohapatra S."/>
            <person name="Nagrani S."/>
            <person name="Purkayastha A."/>
            <person name="Rajasimha H.K."/>
            <person name="Shallom J.M."/>
            <person name="Shallom S."/>
            <person name="Shukla M."/>
            <person name="Snyder E.E."/>
            <person name="Sobral B.W."/>
            <person name="Wattam A.R."/>
            <person name="Will R."/>
            <person name="Williams K."/>
            <person name="Yoo H."/>
            <person name="Bruce D."/>
            <person name="Detter C."/>
            <person name="Munk C."/>
            <person name="Brettin T.S."/>
        </authorList>
    </citation>
    <scope>NUCLEOTIDE SEQUENCE [LARGE SCALE GENOMIC DNA]</scope>
    <source>
        <strain>ATCC 23445 / NCTC 10510</strain>
    </source>
</reference>
<accession>B0CKE3</accession>
<keyword id="KW-0963">Cytoplasm</keyword>
<keyword id="KW-0275">Fatty acid biosynthesis</keyword>
<keyword id="KW-0276">Fatty acid metabolism</keyword>
<keyword id="KW-0444">Lipid biosynthesis</keyword>
<keyword id="KW-0443">Lipid metabolism</keyword>
<keyword id="KW-0596">Phosphopantetheine</keyword>
<keyword id="KW-0597">Phosphoprotein</keyword>
<proteinExistence type="inferred from homology"/>
<protein>
    <recommendedName>
        <fullName evidence="1">Acyl carrier protein</fullName>
        <shortName evidence="1">ACP</shortName>
    </recommendedName>
</protein>
<sequence length="78" mass="8301">MSDTAERVKKIVVEHLGVDADKVTEGASFIDDLGADSLDTVELVMAFEEEFGVEIPDDAAETILTVGDAVKFIDKASA</sequence>
<gene>
    <name evidence="1" type="primary">acpP</name>
    <name type="ordered locus">BSUIS_A0485</name>
</gene>
<name>ACP_BRUSI</name>